<dbReference type="EC" id="1.3.99.-" evidence="4"/>
<dbReference type="EMBL" id="BX284603">
    <property type="protein sequence ID" value="CAA21490.1"/>
    <property type="molecule type" value="Genomic_DNA"/>
</dbReference>
<dbReference type="EMBL" id="BX284603">
    <property type="protein sequence ID" value="CAJ30236.1"/>
    <property type="molecule type" value="Genomic_DNA"/>
</dbReference>
<dbReference type="PIR" id="T26942">
    <property type="entry name" value="T26942"/>
</dbReference>
<dbReference type="RefSeq" id="NP_001033378.1">
    <molecule id="Q9XWZ2-1"/>
    <property type="nucleotide sequence ID" value="NM_001038289.7"/>
</dbReference>
<dbReference type="RefSeq" id="NP_001033379.1">
    <property type="nucleotide sequence ID" value="NM_001038290.2"/>
</dbReference>
<dbReference type="RefSeq" id="NP_001379451.1">
    <molecule id="Q9XWZ2-2"/>
    <property type="nucleotide sequence ID" value="NM_001392194.1"/>
</dbReference>
<dbReference type="PDB" id="4Y9J">
    <property type="method" value="X-ray"/>
    <property type="resolution" value="1.80 A"/>
    <property type="chains" value="A/B=19-611"/>
</dbReference>
<dbReference type="PDB" id="4Y9L">
    <property type="method" value="X-ray"/>
    <property type="resolution" value="2.27 A"/>
    <property type="chains" value="A/B=19-611"/>
</dbReference>
<dbReference type="PDBsum" id="4Y9J"/>
<dbReference type="PDBsum" id="4Y9L"/>
<dbReference type="SMR" id="Q9XWZ2"/>
<dbReference type="FunCoup" id="Q9XWZ2">
    <property type="interactions" value="15"/>
</dbReference>
<dbReference type="STRING" id="6239.Y45F3A.3a.1"/>
<dbReference type="PaxDb" id="6239-Y45F3A.3a.2"/>
<dbReference type="PeptideAtlas" id="Q9XWZ2"/>
<dbReference type="EnsemblMetazoa" id="Y45F3A.3a.1">
    <molecule id="Q9XWZ2-1"/>
    <property type="protein sequence ID" value="Y45F3A.3a.1"/>
    <property type="gene ID" value="WBGene00012860"/>
</dbReference>
<dbReference type="EnsemblMetazoa" id="Y45F3A.3b.1">
    <molecule id="Q9XWZ2-2"/>
    <property type="protein sequence ID" value="Y45F3A.3b.1"/>
    <property type="gene ID" value="WBGene00012860"/>
</dbReference>
<dbReference type="GeneID" id="176477"/>
<dbReference type="KEGG" id="cel:CELE_Y45F3A.3"/>
<dbReference type="UCSC" id="Y45F3A.3a.1">
    <property type="organism name" value="c. elegans"/>
</dbReference>
<dbReference type="AGR" id="WB:WBGene00012860"/>
<dbReference type="CTD" id="176477"/>
<dbReference type="WormBase" id="Y45F3A.3a">
    <molecule id="Q9XWZ2-1"/>
    <property type="protein sequence ID" value="CE19166"/>
    <property type="gene ID" value="WBGene00012860"/>
    <property type="gene designation" value="acdh-11"/>
</dbReference>
<dbReference type="WormBase" id="Y45F3A.3b">
    <molecule id="Q9XWZ2-2"/>
    <property type="protein sequence ID" value="CE39116"/>
    <property type="gene ID" value="WBGene00012860"/>
    <property type="gene designation" value="acdh-11"/>
</dbReference>
<dbReference type="eggNOG" id="KOG0137">
    <property type="taxonomic scope" value="Eukaryota"/>
</dbReference>
<dbReference type="GeneTree" id="ENSGT00640000091701"/>
<dbReference type="InParanoid" id="Q9XWZ2"/>
<dbReference type="OMA" id="IEMVAMT"/>
<dbReference type="OrthoDB" id="10251155at2759"/>
<dbReference type="PhylomeDB" id="Q9XWZ2"/>
<dbReference type="EvolutionaryTrace" id="Q9XWZ2"/>
<dbReference type="PRO" id="PR:Q9XWZ2"/>
<dbReference type="Proteomes" id="UP000001940">
    <property type="component" value="Chromosome III"/>
</dbReference>
<dbReference type="Bgee" id="WBGene00012860">
    <property type="expression patterns" value="Expressed in embryo and 4 other cell types or tissues"/>
</dbReference>
<dbReference type="GO" id="GO:0003995">
    <property type="term" value="F:acyl-CoA dehydrogenase activity"/>
    <property type="evidence" value="ECO:0000318"/>
    <property type="project" value="GO_Central"/>
</dbReference>
<dbReference type="GO" id="GO:0005504">
    <property type="term" value="F:fatty acid binding"/>
    <property type="evidence" value="ECO:0000315"/>
    <property type="project" value="WormBase"/>
</dbReference>
<dbReference type="GO" id="GO:0000166">
    <property type="term" value="F:nucleotide binding"/>
    <property type="evidence" value="ECO:0007669"/>
    <property type="project" value="UniProtKB-KW"/>
</dbReference>
<dbReference type="GO" id="GO:1990845">
    <property type="term" value="P:adaptive thermogenesis"/>
    <property type="evidence" value="ECO:0000315"/>
    <property type="project" value="WormBase"/>
</dbReference>
<dbReference type="GO" id="GO:0006631">
    <property type="term" value="P:fatty acid metabolic process"/>
    <property type="evidence" value="ECO:0007669"/>
    <property type="project" value="UniProtKB-KW"/>
</dbReference>
<dbReference type="CDD" id="cd01154">
    <property type="entry name" value="AidB"/>
    <property type="match status" value="1"/>
</dbReference>
<dbReference type="Gene3D" id="2.40.110.20">
    <property type="match status" value="1"/>
</dbReference>
<dbReference type="Gene3D" id="6.10.250.600">
    <property type="match status" value="1"/>
</dbReference>
<dbReference type="Gene3D" id="1.20.140.10">
    <property type="entry name" value="Butyryl-CoA Dehydrogenase, subunit A, domain 3"/>
    <property type="match status" value="1"/>
</dbReference>
<dbReference type="InterPro" id="IPR053998">
    <property type="entry name" value="ACDH-11_C"/>
</dbReference>
<dbReference type="InterPro" id="IPR052904">
    <property type="entry name" value="Acyl-CoA_dehydrogenase-like"/>
</dbReference>
<dbReference type="InterPro" id="IPR006091">
    <property type="entry name" value="Acyl-CoA_Oxase/DH_mid-dom"/>
</dbReference>
<dbReference type="InterPro" id="IPR036250">
    <property type="entry name" value="AcylCo_DH-like_C"/>
</dbReference>
<dbReference type="InterPro" id="IPR009075">
    <property type="entry name" value="AcylCo_DH/oxidase_C"/>
</dbReference>
<dbReference type="InterPro" id="IPR009100">
    <property type="entry name" value="AcylCoA_DH/oxidase_NM_dom_sf"/>
</dbReference>
<dbReference type="InterPro" id="IPR034184">
    <property type="entry name" value="AidB"/>
</dbReference>
<dbReference type="InterPro" id="IPR041504">
    <property type="entry name" value="AidB_N"/>
</dbReference>
<dbReference type="PANTHER" id="PTHR42707:SF2">
    <property type="entry name" value="ACD11 DEHYDROGENASE"/>
    <property type="match status" value="1"/>
</dbReference>
<dbReference type="PANTHER" id="PTHR42707">
    <property type="entry name" value="ACYL-COA DEHYDROGENASE"/>
    <property type="match status" value="1"/>
</dbReference>
<dbReference type="Pfam" id="PF22217">
    <property type="entry name" value="ACDH-11_C"/>
    <property type="match status" value="1"/>
</dbReference>
<dbReference type="Pfam" id="PF00441">
    <property type="entry name" value="Acyl-CoA_dh_1"/>
    <property type="match status" value="1"/>
</dbReference>
<dbReference type="Pfam" id="PF02770">
    <property type="entry name" value="Acyl-CoA_dh_M"/>
    <property type="match status" value="1"/>
</dbReference>
<dbReference type="Pfam" id="PF18158">
    <property type="entry name" value="AidB_N"/>
    <property type="match status" value="1"/>
</dbReference>
<dbReference type="SUPFAM" id="SSF47203">
    <property type="entry name" value="Acyl-CoA dehydrogenase C-terminal domain-like"/>
    <property type="match status" value="1"/>
</dbReference>
<dbReference type="SUPFAM" id="SSF56645">
    <property type="entry name" value="Acyl-CoA dehydrogenase NM domain-like"/>
    <property type="match status" value="1"/>
</dbReference>
<name>ACD11_CAEEL</name>
<protein>
    <recommendedName>
        <fullName evidence="6">Acyl-CoA dehydrogenase family member 11</fullName>
        <ecNumber evidence="4">1.3.99.-</ecNumber>
    </recommendedName>
</protein>
<reference evidence="5" key="1">
    <citation type="journal article" date="1998" name="Science">
        <title>Genome sequence of the nematode C. elegans: a platform for investigating biology.</title>
        <authorList>
            <consortium name="The C. elegans sequencing consortium"/>
        </authorList>
    </citation>
    <scope>NUCLEOTIDE SEQUENCE [LARGE SCALE GENOMIC DNA]</scope>
    <source>
        <strain evidence="5">Bristol N2</strain>
    </source>
</reference>
<reference evidence="8 9" key="2">
    <citation type="journal article" date="2015" name="Cell">
        <title>Acyl-CoA dehydrogenase drives heat adaptation by sequestering fatty acids.</title>
        <authorList>
            <person name="Ma D.K."/>
            <person name="Li Z."/>
            <person name="Lu A.Y."/>
            <person name="Sun F."/>
            <person name="Chen S."/>
            <person name="Rothe M."/>
            <person name="Menzel R."/>
            <person name="Sun F."/>
            <person name="Horvitz H.R."/>
        </authorList>
    </citation>
    <scope>X-RAY CRYSTALLOGRAPHY (1.80 ANGSTROMS) OF 19-611 IN COMPLEX WITH ACYL-COENZYME A</scope>
    <scope>FUNCTION</scope>
    <scope>SUBUNIT</scope>
    <scope>INDUCTION</scope>
    <scope>DISRUPTION PHENOTYPE</scope>
    <scope>MUTAGENESIS OF GLU-91; SER-156; GLY-158; GLY-214; GLY-443 AND ARG-455</scope>
</reference>
<feature type="chain" id="PRO_0000434437" description="Acyl-CoA dehydrogenase family member 11" evidence="4">
    <location>
        <begin position="1"/>
        <end position="617"/>
    </location>
</feature>
<feature type="region of interest" description="Disordered" evidence="2">
    <location>
        <begin position="1"/>
        <end position="47"/>
    </location>
</feature>
<feature type="compositionally biased region" description="Low complexity" evidence="2">
    <location>
        <begin position="11"/>
        <end position="22"/>
    </location>
</feature>
<feature type="compositionally biased region" description="Polar residues" evidence="2">
    <location>
        <begin position="23"/>
        <end position="41"/>
    </location>
</feature>
<feature type="binding site" description="in other chain" evidence="8 9">
    <location>
        <begin position="206"/>
        <end position="215"/>
    </location>
    <ligand>
        <name>FAD</name>
        <dbReference type="ChEBI" id="CHEBI:57692"/>
        <note>ligand shared between two neighboring subunits</note>
    </ligand>
</feature>
<feature type="binding site" evidence="8">
    <location>
        <position position="215"/>
    </location>
    <ligand>
        <name>substrate</name>
    </ligand>
</feature>
<feature type="binding site" description="in other chain" evidence="8 9">
    <location>
        <begin position="241"/>
        <end position="243"/>
    </location>
    <ligand>
        <name>FAD</name>
        <dbReference type="ChEBI" id="CHEBI:57692"/>
        <note>ligand shared between two neighboring subunits</note>
    </ligand>
</feature>
<feature type="binding site" evidence="8">
    <location>
        <position position="267"/>
    </location>
    <ligand>
        <name>substrate</name>
    </ligand>
</feature>
<feature type="binding site" evidence="8">
    <location>
        <position position="334"/>
    </location>
    <ligand>
        <name>substrate</name>
    </ligand>
</feature>
<feature type="binding site" evidence="8 9">
    <location>
        <position position="359"/>
    </location>
    <ligand>
        <name>FAD</name>
        <dbReference type="ChEBI" id="CHEBI:57692"/>
        <note>ligand shared between two neighboring subunits</note>
    </ligand>
</feature>
<feature type="binding site" description="in other chain" evidence="8 9">
    <location>
        <begin position="366"/>
        <end position="369"/>
    </location>
    <ligand>
        <name>FAD</name>
        <dbReference type="ChEBI" id="CHEBI:57692"/>
        <note>ligand shared between two neighboring subunits</note>
    </ligand>
</feature>
<feature type="binding site" evidence="9">
    <location>
        <position position="437"/>
    </location>
    <ligand>
        <name>FAD</name>
        <dbReference type="ChEBI" id="CHEBI:57692"/>
        <note>ligand shared between two neighboring subunits</note>
    </ligand>
</feature>
<feature type="binding site" evidence="8 9">
    <location>
        <position position="441"/>
    </location>
    <ligand>
        <name>FAD</name>
        <dbReference type="ChEBI" id="CHEBI:57692"/>
        <note>ligand shared between two neighboring subunits</note>
    </ligand>
</feature>
<feature type="binding site" description="in other chain" evidence="8 9">
    <location>
        <begin position="464"/>
        <end position="466"/>
    </location>
    <ligand>
        <name>FAD</name>
        <dbReference type="ChEBI" id="CHEBI:57692"/>
        <note>ligand shared between two neighboring subunits</note>
    </ligand>
</feature>
<feature type="splice variant" id="VSP_057934" description="In isoform b." evidence="4">
    <location>
        <begin position="1"/>
        <end position="9"/>
    </location>
</feature>
<feature type="mutagenesis site" description="In n5655; suppresses the defects in egg-laying and response to reoxygenation of paqr-2 mutants." evidence="3">
    <original>E</original>
    <variation>K</variation>
    <location>
        <position position="91"/>
    </location>
</feature>
<feature type="mutagenesis site" description="In n5657; suppresses the defects in egg-laying and response to reoxygenation of paqr-2 mutants." evidence="3">
    <original>S</original>
    <variation>F</variation>
    <location>
        <position position="156"/>
    </location>
</feature>
<feature type="mutagenesis site" description="In n5661; suppresses the defects in egg-laying and response to reoxygenation of paqr-2 mutants." evidence="3">
    <original>G</original>
    <variation>R</variation>
    <location>
        <position position="158"/>
    </location>
</feature>
<feature type="mutagenesis site" description="In n5879; suppresses the defects in egg-laying and response to reoxygenation of paqr-2 mutants." evidence="3">
    <original>G</original>
    <variation>E</variation>
    <location>
        <position position="214"/>
    </location>
</feature>
<feature type="mutagenesis site" description="In n5877; suppresses the defects in egg-laying and response to reoxygenation of paqr-2 mutants." evidence="3">
    <original>G</original>
    <variation>R</variation>
    <location>
        <position position="443"/>
    </location>
</feature>
<feature type="mutagenesis site" description="In n5876; suppresses the defects in egg-laying and response to reoxygenation of paqr-2 mutants." evidence="3">
    <original>R</original>
    <variation>H</variation>
    <location>
        <position position="455"/>
    </location>
</feature>
<feature type="helix" evidence="10">
    <location>
        <begin position="24"/>
        <end position="26"/>
    </location>
</feature>
<feature type="turn" evidence="10">
    <location>
        <begin position="45"/>
        <end position="48"/>
    </location>
</feature>
<feature type="helix" evidence="10">
    <location>
        <begin position="52"/>
        <end position="59"/>
    </location>
</feature>
<feature type="helix" evidence="10">
    <location>
        <begin position="62"/>
        <end position="81"/>
    </location>
</feature>
<feature type="helix" evidence="10">
    <location>
        <begin position="83"/>
        <end position="92"/>
    </location>
</feature>
<feature type="strand" evidence="10">
    <location>
        <begin position="96"/>
        <end position="100"/>
    </location>
</feature>
<feature type="strand" evidence="10">
    <location>
        <begin position="106"/>
        <end position="111"/>
    </location>
</feature>
<feature type="helix" evidence="10">
    <location>
        <begin position="114"/>
        <end position="125"/>
    </location>
</feature>
<feature type="turn" evidence="10">
    <location>
        <begin position="126"/>
        <end position="129"/>
    </location>
</feature>
<feature type="helix" evidence="10">
    <location>
        <begin position="130"/>
        <end position="132"/>
    </location>
</feature>
<feature type="helix" evidence="10">
    <location>
        <begin position="139"/>
        <end position="153"/>
    </location>
</feature>
<feature type="helix" evidence="10">
    <location>
        <begin position="154"/>
        <end position="156"/>
    </location>
</feature>
<feature type="turn" evidence="10">
    <location>
        <begin position="158"/>
        <end position="160"/>
    </location>
</feature>
<feature type="helix" evidence="10">
    <location>
        <begin position="161"/>
        <end position="176"/>
    </location>
</feature>
<feature type="turn" evidence="10">
    <location>
        <begin position="180"/>
        <end position="182"/>
    </location>
</feature>
<feature type="helix" evidence="10">
    <location>
        <begin position="184"/>
        <end position="193"/>
    </location>
</feature>
<feature type="turn" evidence="10">
    <location>
        <begin position="198"/>
        <end position="200"/>
    </location>
</feature>
<feature type="strand" evidence="10">
    <location>
        <begin position="204"/>
        <end position="207"/>
    </location>
</feature>
<feature type="helix" evidence="10">
    <location>
        <begin position="217"/>
        <end position="220"/>
    </location>
</feature>
<feature type="strand" evidence="10">
    <location>
        <begin position="224"/>
        <end position="229"/>
    </location>
</feature>
<feature type="strand" evidence="10">
    <location>
        <begin position="232"/>
        <end position="243"/>
    </location>
</feature>
<feature type="strand" evidence="10">
    <location>
        <begin position="247"/>
        <end position="256"/>
    </location>
</feature>
<feature type="helix" evidence="10">
    <location>
        <begin position="267"/>
        <end position="269"/>
    </location>
</feature>
<feature type="strand" evidence="10">
    <location>
        <begin position="270"/>
        <end position="278"/>
    </location>
</feature>
<feature type="strand" evidence="10">
    <location>
        <begin position="284"/>
        <end position="292"/>
    </location>
</feature>
<feature type="strand" evidence="10">
    <location>
        <begin position="295"/>
        <end position="297"/>
    </location>
</feature>
<feature type="strand" evidence="10">
    <location>
        <begin position="303"/>
        <end position="317"/>
    </location>
</feature>
<feature type="helix" evidence="10">
    <location>
        <begin position="322"/>
        <end position="327"/>
    </location>
</feature>
<feature type="helix" evidence="10">
    <location>
        <begin position="330"/>
        <end position="356"/>
    </location>
</feature>
<feature type="helix" evidence="10">
    <location>
        <begin position="366"/>
        <end position="368"/>
    </location>
</feature>
<feature type="helix" evidence="10">
    <location>
        <begin position="370"/>
        <end position="402"/>
    </location>
</feature>
<feature type="helix" evidence="10">
    <location>
        <begin position="407"/>
        <end position="437"/>
    </location>
</feature>
<feature type="helix" evidence="10">
    <location>
        <begin position="438"/>
        <end position="444"/>
    </location>
</feature>
<feature type="helix" evidence="10">
    <location>
        <begin position="446"/>
        <end position="448"/>
    </location>
</feature>
<feature type="helix" evidence="10">
    <location>
        <begin position="450"/>
        <end position="457"/>
    </location>
</feature>
<feature type="turn" evidence="10">
    <location>
        <begin position="458"/>
        <end position="464"/>
    </location>
</feature>
<feature type="helix" evidence="10">
    <location>
        <begin position="467"/>
        <end position="478"/>
    </location>
</feature>
<feature type="helix" evidence="10">
    <location>
        <begin position="483"/>
        <end position="496"/>
    </location>
</feature>
<feature type="helix" evidence="10">
    <location>
        <begin position="504"/>
        <end position="528"/>
    </location>
</feature>
<feature type="helix" evidence="10">
    <location>
        <begin position="530"/>
        <end position="535"/>
    </location>
</feature>
<feature type="helix" evidence="10">
    <location>
        <begin position="538"/>
        <end position="541"/>
    </location>
</feature>
<feature type="helix" evidence="10">
    <location>
        <begin position="542"/>
        <end position="562"/>
    </location>
</feature>
<feature type="turn" evidence="10">
    <location>
        <begin position="565"/>
        <end position="567"/>
    </location>
</feature>
<feature type="helix" evidence="10">
    <location>
        <begin position="570"/>
        <end position="581"/>
    </location>
</feature>
<feature type="helix" evidence="10">
    <location>
        <begin position="590"/>
        <end position="593"/>
    </location>
</feature>
<feature type="helix" evidence="10">
    <location>
        <begin position="595"/>
        <end position="605"/>
    </location>
</feature>
<feature type="turn" evidence="10">
    <location>
        <begin position="606"/>
        <end position="608"/>
    </location>
</feature>
<gene>
    <name evidence="6" type="primary">acdh-11</name>
    <name evidence="6" type="ORF">Y45F3A.3</name>
</gene>
<sequence>MHRIGNAVRMASSSSANATITARHTQYSHAKTGGFSQTGPTLHNPYKDDPILDRTLRRLLPESEYMRVAADLSKFGDRITSEVEHLGRQAELEQPRLEHQDAWGKRVDKLIVCNEWHKLKQICAEEGVISIGYEDSVDPFVRRIHQVAKLFLFSPSAGLVSCPMAMTDGAVKTLTSLNLYGKHKLATEAVDRLRSRDPSKAWTSGQWMTEKKGGSDVAGGCDTYAVQIDKDTYRLHGYKWFSSAVDADVALTLARIVDSDGNALEGSRGLSLFLLKIRDESGNLNGIQMVRLKNKLGTKQLPTAELLLDGAIAERIGDQGRGVAGISNMLNITRIHNAVASLGYMRRIISLARDYSTKRVVFGQTQSKWPLHTTTLAKMEVDTRGSMLLLFEAARLLGLSEAGKSSDVEAMMLRLITPVLKLYAGKQAVPMVSEGIECFGGQGYMEDTGLPTLLRDAQVTPIWEGTTNVLSLDVLRVFSGKENILLAFGKRVEQLLGNTKTEDEKLKKSKEAVESALKQLQKLLVKASDSAIQGETRIDSVARHIAFTIARIYSGALLIDHASDSSVANQSDIEVAYRYCCEQPLIDLRWEWFASERVKADREIVFDNFTALEKSKI</sequence>
<comment type="function">
    <text evidence="3">Promotes adaption to elevated temperatures by regulating expression of the lipid desaturase, fat-7. Binds selectively and with high affinity to fatty acids with chain lengths from C10 to C12 and prevents them from activating fat-7 expression mediated by the nuclear hormone receptor nhr-49, leading to low levels of membrane lipid desaturation and membrane fluidity for adaption to heat.</text>
</comment>
<comment type="subunit">
    <text evidence="3">Homotetramer; dimer of dimers.</text>
</comment>
<comment type="alternative products">
    <event type="alternative splicing"/>
    <isoform>
        <id>Q9XWZ2-1</id>
        <name evidence="6">a</name>
        <sequence type="displayed"/>
    </isoform>
    <isoform>
        <id>Q9XWZ2-2</id>
        <name evidence="7">b</name>
        <sequence type="described" ref="VSP_057934"/>
    </isoform>
</comment>
<comment type="induction">
    <text evidence="3">By heat. Two-fold induction at 25 degrees Celsius compared with 15 degrees Celsius.</text>
</comment>
<comment type="disruption phenotype">
    <text evidence="3">Temperature-sensitive mutants in which embryos develop to adulthood at 15 and 20 degrees Celsius, but have a poor survival incidence at 25 degrees Celsius. Mutants have increased membrane fluidity and abnormal compositions of fatty acid species.</text>
</comment>
<comment type="similarity">
    <text evidence="1">Belongs to the acyl-CoA dehydrogenase family.</text>
</comment>
<proteinExistence type="evidence at protein level"/>
<keyword id="KW-0002">3D-structure</keyword>
<keyword id="KW-0025">Alternative splicing</keyword>
<keyword id="KW-0274">FAD</keyword>
<keyword id="KW-0276">Fatty acid metabolism</keyword>
<keyword id="KW-0285">Flavoprotein</keyword>
<keyword id="KW-0443">Lipid metabolism</keyword>
<keyword id="KW-0547">Nucleotide-binding</keyword>
<keyword id="KW-0560">Oxidoreductase</keyword>
<keyword id="KW-1185">Reference proteome</keyword>
<accession>Q9XWZ2</accession>
<accession>Q3T978</accession>
<evidence type="ECO:0000255" key="1">
    <source>
        <dbReference type="RuleBase" id="RU004309"/>
    </source>
</evidence>
<evidence type="ECO:0000256" key="2">
    <source>
        <dbReference type="SAM" id="MobiDB-lite"/>
    </source>
</evidence>
<evidence type="ECO:0000269" key="3">
    <source>
    </source>
</evidence>
<evidence type="ECO:0000305" key="4"/>
<evidence type="ECO:0000312" key="5">
    <source>
        <dbReference type="Proteomes" id="UP000001940"/>
    </source>
</evidence>
<evidence type="ECO:0000312" key="6">
    <source>
        <dbReference type="WormBase" id="Y45F3A.3a"/>
    </source>
</evidence>
<evidence type="ECO:0000312" key="7">
    <source>
        <dbReference type="WormBase" id="Y45F3A.3b"/>
    </source>
</evidence>
<evidence type="ECO:0007744" key="8">
    <source>
        <dbReference type="PDB" id="4Y9J"/>
    </source>
</evidence>
<evidence type="ECO:0007744" key="9">
    <source>
        <dbReference type="PDB" id="4Y9L"/>
    </source>
</evidence>
<evidence type="ECO:0007829" key="10">
    <source>
        <dbReference type="PDB" id="4Y9J"/>
    </source>
</evidence>
<organism evidence="5">
    <name type="scientific">Caenorhabditis elegans</name>
    <dbReference type="NCBI Taxonomy" id="6239"/>
    <lineage>
        <taxon>Eukaryota</taxon>
        <taxon>Metazoa</taxon>
        <taxon>Ecdysozoa</taxon>
        <taxon>Nematoda</taxon>
        <taxon>Chromadorea</taxon>
        <taxon>Rhabditida</taxon>
        <taxon>Rhabditina</taxon>
        <taxon>Rhabditomorpha</taxon>
        <taxon>Rhabditoidea</taxon>
        <taxon>Rhabditidae</taxon>
        <taxon>Peloderinae</taxon>
        <taxon>Caenorhabditis</taxon>
    </lineage>
</organism>